<organism>
    <name type="scientific">Mycoplasma mycoides subsp. mycoides SC (strain CCUG 32753 / NCTC 10114 / PG1)</name>
    <dbReference type="NCBI Taxonomy" id="272632"/>
    <lineage>
        <taxon>Bacteria</taxon>
        <taxon>Bacillati</taxon>
        <taxon>Mycoplasmatota</taxon>
        <taxon>Mollicutes</taxon>
        <taxon>Mycoplasmataceae</taxon>
        <taxon>Mycoplasma</taxon>
    </lineage>
</organism>
<gene>
    <name evidence="1" type="primary">rpsQ</name>
    <name type="ordered locus">MSC_0736</name>
</gene>
<evidence type="ECO:0000255" key="1">
    <source>
        <dbReference type="HAMAP-Rule" id="MF_01345"/>
    </source>
</evidence>
<evidence type="ECO:0000305" key="2"/>
<dbReference type="EMBL" id="BX293980">
    <property type="protein sequence ID" value="CAE77354.1"/>
    <property type="molecule type" value="Genomic_DNA"/>
</dbReference>
<dbReference type="RefSeq" id="NP_975712.1">
    <property type="nucleotide sequence ID" value="NC_005364.2"/>
</dbReference>
<dbReference type="SMR" id="Q6MSN4"/>
<dbReference type="STRING" id="272632.MSC_0736"/>
<dbReference type="KEGG" id="mmy:MSC_0736"/>
<dbReference type="PATRIC" id="fig|272632.4.peg.793"/>
<dbReference type="eggNOG" id="COG0186">
    <property type="taxonomic scope" value="Bacteria"/>
</dbReference>
<dbReference type="HOGENOM" id="CLU_073626_1_0_14"/>
<dbReference type="PRO" id="PR:Q6MSN4"/>
<dbReference type="Proteomes" id="UP000001016">
    <property type="component" value="Chromosome"/>
</dbReference>
<dbReference type="GO" id="GO:0022627">
    <property type="term" value="C:cytosolic small ribosomal subunit"/>
    <property type="evidence" value="ECO:0007669"/>
    <property type="project" value="TreeGrafter"/>
</dbReference>
<dbReference type="GO" id="GO:0019843">
    <property type="term" value="F:rRNA binding"/>
    <property type="evidence" value="ECO:0007669"/>
    <property type="project" value="UniProtKB-UniRule"/>
</dbReference>
<dbReference type="GO" id="GO:0003735">
    <property type="term" value="F:structural constituent of ribosome"/>
    <property type="evidence" value="ECO:0007669"/>
    <property type="project" value="InterPro"/>
</dbReference>
<dbReference type="GO" id="GO:0006412">
    <property type="term" value="P:translation"/>
    <property type="evidence" value="ECO:0007669"/>
    <property type="project" value="UniProtKB-UniRule"/>
</dbReference>
<dbReference type="CDD" id="cd00364">
    <property type="entry name" value="Ribosomal_uS17"/>
    <property type="match status" value="1"/>
</dbReference>
<dbReference type="FunFam" id="2.40.50.140:FF:000026">
    <property type="entry name" value="30S ribosomal protein S17"/>
    <property type="match status" value="1"/>
</dbReference>
<dbReference type="Gene3D" id="2.40.50.140">
    <property type="entry name" value="Nucleic acid-binding proteins"/>
    <property type="match status" value="1"/>
</dbReference>
<dbReference type="HAMAP" id="MF_01345_B">
    <property type="entry name" value="Ribosomal_uS17_B"/>
    <property type="match status" value="1"/>
</dbReference>
<dbReference type="InterPro" id="IPR012340">
    <property type="entry name" value="NA-bd_OB-fold"/>
</dbReference>
<dbReference type="InterPro" id="IPR000266">
    <property type="entry name" value="Ribosomal_uS17"/>
</dbReference>
<dbReference type="InterPro" id="IPR019984">
    <property type="entry name" value="Ribosomal_uS17_bact/chlr"/>
</dbReference>
<dbReference type="InterPro" id="IPR019979">
    <property type="entry name" value="Ribosomal_uS17_CS"/>
</dbReference>
<dbReference type="NCBIfam" id="NF004123">
    <property type="entry name" value="PRK05610.1"/>
    <property type="match status" value="1"/>
</dbReference>
<dbReference type="NCBIfam" id="TIGR03635">
    <property type="entry name" value="uS17_bact"/>
    <property type="match status" value="1"/>
</dbReference>
<dbReference type="PANTHER" id="PTHR10744">
    <property type="entry name" value="40S RIBOSOMAL PROTEIN S11 FAMILY MEMBER"/>
    <property type="match status" value="1"/>
</dbReference>
<dbReference type="PANTHER" id="PTHR10744:SF1">
    <property type="entry name" value="SMALL RIBOSOMAL SUBUNIT PROTEIN US17M"/>
    <property type="match status" value="1"/>
</dbReference>
<dbReference type="Pfam" id="PF00366">
    <property type="entry name" value="Ribosomal_S17"/>
    <property type="match status" value="1"/>
</dbReference>
<dbReference type="PRINTS" id="PR00973">
    <property type="entry name" value="RIBOSOMALS17"/>
</dbReference>
<dbReference type="SUPFAM" id="SSF50249">
    <property type="entry name" value="Nucleic acid-binding proteins"/>
    <property type="match status" value="1"/>
</dbReference>
<dbReference type="PROSITE" id="PS00056">
    <property type="entry name" value="RIBOSOMAL_S17"/>
    <property type="match status" value="1"/>
</dbReference>
<proteinExistence type="inferred from homology"/>
<sequence length="85" mass="10051">MQRNSRRVLIGKVVSDKMDKTITVLVETYKNHPIYKKRVKYSKKYKAHDENQVAQMGDKVEIMETRPLSKTKNFRLVRVIEKATL</sequence>
<accession>Q6MSN4</accession>
<reference key="1">
    <citation type="journal article" date="2004" name="Genome Res.">
        <title>The genome sequence of Mycoplasma mycoides subsp. mycoides SC type strain PG1T, the causative agent of contagious bovine pleuropneumonia (CBPP).</title>
        <authorList>
            <person name="Westberg J."/>
            <person name="Persson A."/>
            <person name="Holmberg A."/>
            <person name="Goesmann A."/>
            <person name="Lundeberg J."/>
            <person name="Johansson K.-E."/>
            <person name="Pettersson B."/>
            <person name="Uhlen M."/>
        </authorList>
    </citation>
    <scope>NUCLEOTIDE SEQUENCE [LARGE SCALE GENOMIC DNA]</scope>
    <source>
        <strain>CCUG 32753 / NCTC 10114 / PG1</strain>
    </source>
</reference>
<feature type="chain" id="PRO_0000233512" description="Small ribosomal subunit protein uS17">
    <location>
        <begin position="1"/>
        <end position="85"/>
    </location>
</feature>
<keyword id="KW-1185">Reference proteome</keyword>
<keyword id="KW-0687">Ribonucleoprotein</keyword>
<keyword id="KW-0689">Ribosomal protein</keyword>
<keyword id="KW-0694">RNA-binding</keyword>
<keyword id="KW-0699">rRNA-binding</keyword>
<comment type="function">
    <text evidence="1">One of the primary rRNA binding proteins, it binds specifically to the 5'-end of 16S ribosomal RNA.</text>
</comment>
<comment type="subunit">
    <text evidence="1">Part of the 30S ribosomal subunit.</text>
</comment>
<comment type="similarity">
    <text evidence="1">Belongs to the universal ribosomal protein uS17 family.</text>
</comment>
<protein>
    <recommendedName>
        <fullName evidence="1">Small ribosomal subunit protein uS17</fullName>
    </recommendedName>
    <alternativeName>
        <fullName evidence="2">30S ribosomal protein S17</fullName>
    </alternativeName>
</protein>
<name>RS17_MYCMS</name>